<keyword id="KW-1132">Decay of host mRNAs by virus</keyword>
<keyword id="KW-1262">Eukaryotic host gene expression shutoff by virus</keyword>
<keyword id="KW-1035">Host cytoplasm</keyword>
<keyword id="KW-1190">Host gene expression shutoff by virus</keyword>
<keyword id="KW-1192">Host mRNA suppression by virus</keyword>
<keyword id="KW-1048">Host nucleus</keyword>
<keyword id="KW-0945">Host-virus interaction</keyword>
<keyword id="KW-0688">Ribosomal frameshifting</keyword>
<feature type="chain" id="PRO_0000419407" description="Protein PA-X">
    <location>
        <begin position="1"/>
        <end position="252"/>
    </location>
</feature>
<feature type="active site" evidence="2">
    <location>
        <position position="80"/>
    </location>
</feature>
<feature type="active site" evidence="2">
    <location>
        <position position="108"/>
    </location>
</feature>
<feature type="site" description="Important for efficient shutoff activity and nuclear localization" evidence="4">
    <location>
        <position position="195"/>
    </location>
</feature>
<feature type="site" description="Important for efficient shutoff activity and nuclear localization" evidence="4">
    <location>
        <position position="198"/>
    </location>
</feature>
<feature type="site" description="Important for efficient shutoff activity and nuclear localization" evidence="4">
    <location>
        <position position="199"/>
    </location>
</feature>
<feature type="site" description="Important for efficient shutoff activity" evidence="3">
    <location>
        <position position="202"/>
    </location>
</feature>
<feature type="site" description="Important for efficient shutoff activity" evidence="3">
    <location>
        <position position="203"/>
    </location>
</feature>
<feature type="site" description="Important for efficient shutoff activity" evidence="3">
    <location>
        <position position="206"/>
    </location>
</feature>
<proteinExistence type="inferred from homology"/>
<gene>
    <name type="primary">PA</name>
</gene>
<evidence type="ECO:0000250" key="1">
    <source>
        <dbReference type="UniProtKB" id="P0CK64"/>
    </source>
</evidence>
<evidence type="ECO:0000250" key="2">
    <source>
        <dbReference type="UniProtKB" id="P0CK68"/>
    </source>
</evidence>
<evidence type="ECO:0000250" key="3">
    <source>
        <dbReference type="UniProtKB" id="P0DJW8"/>
    </source>
</evidence>
<evidence type="ECO:0000250" key="4">
    <source>
        <dbReference type="UniProtKB" id="P0DXO5"/>
    </source>
</evidence>
<evidence type="ECO:0000305" key="5"/>
<accession>P0DJU4</accession>
<name>PAX_I01A0</name>
<dbReference type="EMBL" id="AF509200">
    <property type="status" value="NOT_ANNOTATED_CDS"/>
    <property type="molecule type" value="Genomic_DNA"/>
</dbReference>
<dbReference type="SMR" id="P0DJU4"/>
<dbReference type="GO" id="GO:0003723">
    <property type="term" value="F:RNA binding"/>
    <property type="evidence" value="ECO:0007669"/>
    <property type="project" value="InterPro"/>
</dbReference>
<dbReference type="GO" id="GO:0039694">
    <property type="term" value="P:viral RNA genome replication"/>
    <property type="evidence" value="ECO:0007669"/>
    <property type="project" value="InterPro"/>
</dbReference>
<dbReference type="GO" id="GO:0075523">
    <property type="term" value="P:viral translational frameshifting"/>
    <property type="evidence" value="ECO:0007669"/>
    <property type="project" value="UniProtKB-KW"/>
</dbReference>
<dbReference type="FunFam" id="3.40.91.90:FF:000001">
    <property type="entry name" value="Polymerase acidic protein"/>
    <property type="match status" value="1"/>
</dbReference>
<dbReference type="Gene3D" id="3.40.91.90">
    <property type="entry name" value="Influenza RNA-dependent RNA polymerase subunit PA, endonuclease domain"/>
    <property type="match status" value="1"/>
</dbReference>
<dbReference type="InterPro" id="IPR001009">
    <property type="entry name" value="PA/PA-X"/>
</dbReference>
<dbReference type="InterPro" id="IPR038372">
    <property type="entry name" value="PA/PA-X_sf"/>
</dbReference>
<dbReference type="Pfam" id="PF00603">
    <property type="entry name" value="Flu_PA"/>
    <property type="match status" value="1"/>
</dbReference>
<organismHost>
    <name type="scientific">Aves</name>
    <dbReference type="NCBI Taxonomy" id="8782"/>
</organismHost>
<organismHost>
    <name type="scientific">Felis catus</name>
    <name type="common">Cat</name>
    <name type="synonym">Felis silvestris catus</name>
    <dbReference type="NCBI Taxonomy" id="9685"/>
</organismHost>
<organismHost>
    <name type="scientific">Homo sapiens</name>
    <name type="common">Human</name>
    <dbReference type="NCBI Taxonomy" id="9606"/>
</organismHost>
<organismHost>
    <name type="scientific">Panthera pardus</name>
    <name type="common">Leopard</name>
    <name type="synonym">Felis pardus</name>
    <dbReference type="NCBI Taxonomy" id="9691"/>
</organismHost>
<organismHost>
    <name type="scientific">Panthera tigris</name>
    <name type="common">Tiger</name>
    <dbReference type="NCBI Taxonomy" id="9694"/>
</organismHost>
<organismHost>
    <name type="scientific">Sus scrofa</name>
    <name type="common">Pig</name>
    <dbReference type="NCBI Taxonomy" id="9823"/>
</organismHost>
<protein>
    <recommendedName>
        <fullName>Protein PA-X</fullName>
    </recommendedName>
</protein>
<reference key="1">
    <citation type="journal article" date="2002" name="Proc. Natl. Acad. Sci. U.S.A.">
        <title>Emergence of multiple genotypes of H5N1 avian influenza viruses in Hong Kong SAR.</title>
        <authorList>
            <person name="Guan Y."/>
            <person name="Peiris J.S.M."/>
            <person name="Lipatov A.S."/>
            <person name="Ellis T.M."/>
            <person name="Dyrting K.C."/>
            <person name="Krauss S."/>
            <person name="Zhang L.J."/>
            <person name="Webster R.G."/>
            <person name="Shortridge K.F."/>
        </authorList>
    </citation>
    <scope>NUCLEOTIDE SEQUENCE [GENOMIC RNA]</scope>
</reference>
<reference key="2">
    <citation type="submission" date="2008-03" db="EMBL/GenBank/DDBJ databases">
        <authorList>
            <person name="Li K.S."/>
            <person name="Xu K.M."/>
            <person name="Guan Y."/>
        </authorList>
    </citation>
    <scope>SEQUENCE REVISION</scope>
</reference>
<comment type="function">
    <text evidence="1 4">Plays a major role in the shutoff of the host protein expression by cleaving mRNAs probably via an endonuclease activity. This host shutoff allows the virus to escape from the host antiviral response (By similarity). Hijacks host RNA splicing machinery to selectively target host RNAs containing introns for destruction. This may explain the preferential degradation of RNAs that have undergone co- or post-transcriptional processing (By similarity).</text>
</comment>
<comment type="subcellular location">
    <subcellularLocation>
        <location evidence="4">Host cytoplasm</location>
    </subcellularLocation>
    <subcellularLocation>
        <location evidence="4">Host nucleus</location>
    </subcellularLocation>
</comment>
<comment type="alternative products">
    <event type="ribosomal frameshifting"/>
    <isoform>
        <id>P0DJU4-1</id>
        <name>PA-X</name>
        <sequence type="displayed"/>
    </isoform>
    <isoform>
        <id>Q809J7-1</id>
        <name>PA</name>
        <sequence type="external"/>
    </isoform>
</comment>
<comment type="domain">
    <text evidence="1 4">The probable endonuclease active site in the N-terminus and the basic amino acid cluster in the C-terminus are important for the shutoff activity. The C-terminus acts as a nuclear localization signal (By similarity). The C-terminus is recruited to host protein complexes involved in nuclear Pol II RNA processing (By similarity).</text>
</comment>
<comment type="similarity">
    <text evidence="5">Belongs to the influenza viruses PA-X family.</text>
</comment>
<organism>
    <name type="scientific">Influenza A virus (strain A/Silky Chicken/Hong Kong/SF189/2001 H5N1 genotype A)</name>
    <dbReference type="NCBI Taxonomy" id="196430"/>
    <lineage>
        <taxon>Viruses</taxon>
        <taxon>Riboviria</taxon>
        <taxon>Orthornavirae</taxon>
        <taxon>Negarnaviricota</taxon>
        <taxon>Polyploviricotina</taxon>
        <taxon>Insthoviricetes</taxon>
        <taxon>Articulavirales</taxon>
        <taxon>Orthomyxoviridae</taxon>
        <taxon>Alphainfluenzavirus</taxon>
        <taxon>Alphainfluenzavirus influenzae</taxon>
        <taxon>Influenza A virus</taxon>
    </lineage>
</organism>
<sequence length="252" mass="29395">MEDFVRQCFNPMIVELAEKAMKEYGEDPKIETNKFAAICTHLEVCFMYSDFHFIDERGESTIVESSDPNALLKHRFEIIEGRDRTMAWTVVNSICNTTGVEKPKFLPDLYDYKENRFIEIGVTRREVHTYYLEKANKIKSEKTHIHIFSFTGEEMATKADYTLDEESRARIKTRLYTIRQEMASRGLWDSFVNPKEAKRQLKKDLKSQELCAGLPTKVSHLISPALKTLEPMWMDSNRTAVLRASFLKCQKK</sequence>